<reference key="1">
    <citation type="journal article" date="1998" name="Mol. Cells">
        <title>Induction of reproductive organ-preferential histone genes by wounding or methyl jasmonate.</title>
        <authorList>
            <person name="Kim S.-A."/>
            <person name="Kwak H.-J."/>
            <person name="Park M.-C."/>
            <person name="Kim S.-R."/>
        </authorList>
    </citation>
    <scope>NUCLEOTIDE SEQUENCE [MRNA]</scope>
    <source>
        <tissue>Anther</tissue>
    </source>
</reference>
<dbReference type="EMBL" id="AF038387">
    <property type="protein sequence ID" value="AAB94924.1"/>
    <property type="molecule type" value="mRNA"/>
</dbReference>
<dbReference type="RefSeq" id="NP_001385280.1">
    <property type="nucleotide sequence ID" value="NM_001398351.1"/>
</dbReference>
<dbReference type="RefSeq" id="XP_016537714.1">
    <property type="nucleotide sequence ID" value="XM_016682228.1"/>
</dbReference>
<dbReference type="RefSeq" id="XP_016548436.1">
    <property type="nucleotide sequence ID" value="XM_016692950.2"/>
</dbReference>
<dbReference type="RefSeq" id="XP_016572155.1">
    <property type="nucleotide sequence ID" value="XM_016716669.1"/>
</dbReference>
<dbReference type="RefSeq" id="XP_016575869.1">
    <property type="nucleotide sequence ID" value="XM_016720383.1"/>
</dbReference>
<dbReference type="RefSeq" id="XP_016575870.1">
    <property type="nucleotide sequence ID" value="XM_016720384.1"/>
</dbReference>
<dbReference type="RefSeq" id="XP_016575871.1">
    <property type="nucleotide sequence ID" value="XM_016720385.2"/>
</dbReference>
<dbReference type="RefSeq" id="XP_016575872.2">
    <property type="nucleotide sequence ID" value="XM_016720386.2"/>
</dbReference>
<dbReference type="RefSeq" id="XP_016577791.1">
    <property type="nucleotide sequence ID" value="XM_016722305.2"/>
</dbReference>
<dbReference type="RefSeq" id="XP_016577792.1">
    <property type="nucleotide sequence ID" value="XM_016722306.2"/>
</dbReference>
<dbReference type="RefSeq" id="XP_016577793.1">
    <property type="nucleotide sequence ID" value="XM_016722307.1"/>
</dbReference>
<dbReference type="RefSeq" id="XP_047260177.1">
    <property type="nucleotide sequence ID" value="XM_047404221.1"/>
</dbReference>
<dbReference type="RefSeq" id="XP_047260643.1">
    <property type="nucleotide sequence ID" value="XM_047404687.1"/>
</dbReference>
<dbReference type="RefSeq" id="XP_047262113.1">
    <property type="nucleotide sequence ID" value="XM_047406157.1"/>
</dbReference>
<dbReference type="RefSeq" id="XP_047270082.1">
    <property type="nucleotide sequence ID" value="XM_047414126.1"/>
</dbReference>
<dbReference type="SMR" id="Q71V09"/>
<dbReference type="EnsemblPlants" id="PHT68786">
    <property type="protein sequence ID" value="PHT68786"/>
    <property type="gene ID" value="T459_28273"/>
</dbReference>
<dbReference type="EnsemblPlants" id="PHT75691">
    <property type="protein sequence ID" value="PHT75691"/>
    <property type="gene ID" value="T459_19213"/>
</dbReference>
<dbReference type="EnsemblPlants" id="PHT78068">
    <property type="protein sequence ID" value="PHT78068"/>
    <property type="gene ID" value="T459_16120"/>
</dbReference>
<dbReference type="EnsemblPlants" id="PHT78069">
    <property type="protein sequence ID" value="PHT78069"/>
    <property type="gene ID" value="T459_16121"/>
</dbReference>
<dbReference type="EnsemblPlants" id="PHT80179">
    <property type="protein sequence ID" value="PHT80179"/>
    <property type="gene ID" value="T459_18231"/>
</dbReference>
<dbReference type="EnsemblPlants" id="PHT80181">
    <property type="protein sequence ID" value="PHT80181"/>
    <property type="gene ID" value="T459_18233"/>
</dbReference>
<dbReference type="EnsemblPlants" id="PHT80191">
    <property type="protein sequence ID" value="PHT80191"/>
    <property type="gene ID" value="T459_18243"/>
</dbReference>
<dbReference type="EnsemblPlants" id="PHT80195">
    <property type="protein sequence ID" value="PHT80195"/>
    <property type="gene ID" value="T459_18247"/>
</dbReference>
<dbReference type="EnsemblPlants" id="PHT80893">
    <property type="protein sequence ID" value="PHT80893"/>
    <property type="gene ID" value="T459_13908"/>
</dbReference>
<dbReference type="EnsemblPlants" id="PHT93557">
    <property type="protein sequence ID" value="PHT93557"/>
    <property type="gene ID" value="T459_01439"/>
</dbReference>
<dbReference type="GeneID" id="107848239"/>
<dbReference type="GeneID" id="107873516"/>
<dbReference type="GeneID" id="107873517"/>
<dbReference type="GeneID" id="107873518"/>
<dbReference type="GeneID" id="107873824"/>
<dbReference type="GeneID" id="107875548"/>
<dbReference type="GeneID" id="107875549"/>
<dbReference type="GeneID" id="107875551"/>
<dbReference type="GeneID" id="124893105"/>
<dbReference type="GeneID" id="124895726"/>
<dbReference type="Gramene" id="PHT68786">
    <property type="protein sequence ID" value="PHT68786"/>
    <property type="gene ID" value="T459_28273"/>
</dbReference>
<dbReference type="Gramene" id="PHT75691">
    <property type="protein sequence ID" value="PHT75691"/>
    <property type="gene ID" value="T459_19213"/>
</dbReference>
<dbReference type="Gramene" id="PHT78068">
    <property type="protein sequence ID" value="PHT78068"/>
    <property type="gene ID" value="T459_16120"/>
</dbReference>
<dbReference type="Gramene" id="PHT78069">
    <property type="protein sequence ID" value="PHT78069"/>
    <property type="gene ID" value="T459_16121"/>
</dbReference>
<dbReference type="Gramene" id="PHT80179">
    <property type="protein sequence ID" value="PHT80179"/>
    <property type="gene ID" value="T459_18231"/>
</dbReference>
<dbReference type="Gramene" id="PHT80181">
    <property type="protein sequence ID" value="PHT80181"/>
    <property type="gene ID" value="T459_18233"/>
</dbReference>
<dbReference type="Gramene" id="PHT80191">
    <property type="protein sequence ID" value="PHT80191"/>
    <property type="gene ID" value="T459_18243"/>
</dbReference>
<dbReference type="Gramene" id="PHT80195">
    <property type="protein sequence ID" value="PHT80195"/>
    <property type="gene ID" value="T459_18247"/>
</dbReference>
<dbReference type="Gramene" id="PHT80893">
    <property type="protein sequence ID" value="PHT80893"/>
    <property type="gene ID" value="T459_13908"/>
</dbReference>
<dbReference type="Gramene" id="PHT93557">
    <property type="protein sequence ID" value="PHT93557"/>
    <property type="gene ID" value="T459_01439"/>
</dbReference>
<dbReference type="KEGG" id="cann:107848239"/>
<dbReference type="KEGG" id="cann:107873517"/>
<dbReference type="KEGG" id="cann:107873518"/>
<dbReference type="KEGG" id="cann:107875548"/>
<dbReference type="KEGG" id="cann:107875549"/>
<dbReference type="OrthoDB" id="1881399at2759"/>
<dbReference type="GO" id="GO:0000786">
    <property type="term" value="C:nucleosome"/>
    <property type="evidence" value="ECO:0007669"/>
    <property type="project" value="UniProtKB-KW"/>
</dbReference>
<dbReference type="GO" id="GO:0005634">
    <property type="term" value="C:nucleus"/>
    <property type="evidence" value="ECO:0007669"/>
    <property type="project" value="UniProtKB-SubCell"/>
</dbReference>
<dbReference type="GO" id="GO:0003677">
    <property type="term" value="F:DNA binding"/>
    <property type="evidence" value="ECO:0007669"/>
    <property type="project" value="UniProtKB-KW"/>
</dbReference>
<dbReference type="GO" id="GO:0046982">
    <property type="term" value="F:protein heterodimerization activity"/>
    <property type="evidence" value="ECO:0007669"/>
    <property type="project" value="InterPro"/>
</dbReference>
<dbReference type="GO" id="GO:0030527">
    <property type="term" value="F:structural constituent of chromatin"/>
    <property type="evidence" value="ECO:0007669"/>
    <property type="project" value="InterPro"/>
</dbReference>
<dbReference type="CDD" id="cd22912">
    <property type="entry name" value="HFD_H4"/>
    <property type="match status" value="1"/>
</dbReference>
<dbReference type="FunFam" id="1.10.20.10:FF:000002">
    <property type="entry name" value="Histone H4"/>
    <property type="match status" value="1"/>
</dbReference>
<dbReference type="Gene3D" id="1.10.20.10">
    <property type="entry name" value="Histone, subunit A"/>
    <property type="match status" value="1"/>
</dbReference>
<dbReference type="InterPro" id="IPR035425">
    <property type="entry name" value="CENP-T/H4_C"/>
</dbReference>
<dbReference type="InterPro" id="IPR009072">
    <property type="entry name" value="Histone-fold"/>
</dbReference>
<dbReference type="InterPro" id="IPR001951">
    <property type="entry name" value="Histone_H4"/>
</dbReference>
<dbReference type="InterPro" id="IPR019809">
    <property type="entry name" value="Histone_H4_CS"/>
</dbReference>
<dbReference type="PANTHER" id="PTHR10484">
    <property type="entry name" value="HISTONE H4"/>
    <property type="match status" value="1"/>
</dbReference>
<dbReference type="Pfam" id="PF15511">
    <property type="entry name" value="CENP-T_C"/>
    <property type="match status" value="1"/>
</dbReference>
<dbReference type="PRINTS" id="PR00623">
    <property type="entry name" value="HISTONEH4"/>
</dbReference>
<dbReference type="SMART" id="SM00417">
    <property type="entry name" value="H4"/>
    <property type="match status" value="1"/>
</dbReference>
<dbReference type="SUPFAM" id="SSF47113">
    <property type="entry name" value="Histone-fold"/>
    <property type="match status" value="1"/>
</dbReference>
<dbReference type="PROSITE" id="PS00047">
    <property type="entry name" value="HISTONE_H4"/>
    <property type="match status" value="1"/>
</dbReference>
<keyword id="KW-0007">Acetylation</keyword>
<keyword id="KW-0158">Chromosome</keyword>
<keyword id="KW-0238">DNA-binding</keyword>
<keyword id="KW-0488">Methylation</keyword>
<keyword id="KW-0544">Nucleosome core</keyword>
<keyword id="KW-0539">Nucleus</keyword>
<protein>
    <recommendedName>
        <fullName>Histone H4</fullName>
    </recommendedName>
    <alternativeName>
        <fullName>CaH4</fullName>
    </alternativeName>
</protein>
<feature type="initiator methionine" description="Removed" evidence="1">
    <location>
        <position position="1"/>
    </location>
</feature>
<feature type="chain" id="PRO_0000158293" description="Histone H4">
    <location>
        <begin position="2"/>
        <end position="103"/>
    </location>
</feature>
<feature type="DNA-binding region">
    <location>
        <begin position="17"/>
        <end position="21"/>
    </location>
</feature>
<feature type="region of interest" description="Disordered" evidence="2">
    <location>
        <begin position="1"/>
        <end position="20"/>
    </location>
</feature>
<feature type="compositionally biased region" description="Gly residues" evidence="2">
    <location>
        <begin position="1"/>
        <end position="14"/>
    </location>
</feature>
<feature type="modified residue" description="N-acetylserine" evidence="1">
    <location>
        <position position="2"/>
    </location>
</feature>
<feature type="modified residue" description="N6-acetyllysine" evidence="1">
    <location>
        <position position="17"/>
    </location>
</feature>
<feature type="modified residue" description="N6-methyllysine" evidence="1">
    <location>
        <position position="21"/>
    </location>
</feature>
<organism>
    <name type="scientific">Capsicum annuum</name>
    <name type="common">Capsicum pepper</name>
    <dbReference type="NCBI Taxonomy" id="4072"/>
    <lineage>
        <taxon>Eukaryota</taxon>
        <taxon>Viridiplantae</taxon>
        <taxon>Streptophyta</taxon>
        <taxon>Embryophyta</taxon>
        <taxon>Tracheophyta</taxon>
        <taxon>Spermatophyta</taxon>
        <taxon>Magnoliopsida</taxon>
        <taxon>eudicotyledons</taxon>
        <taxon>Gunneridae</taxon>
        <taxon>Pentapetalae</taxon>
        <taxon>asterids</taxon>
        <taxon>lamiids</taxon>
        <taxon>Solanales</taxon>
        <taxon>Solanaceae</taxon>
        <taxon>Solanoideae</taxon>
        <taxon>Capsiceae</taxon>
        <taxon>Capsicum</taxon>
    </lineage>
</organism>
<evidence type="ECO:0000250" key="1"/>
<evidence type="ECO:0000256" key="2">
    <source>
        <dbReference type="SAM" id="MobiDB-lite"/>
    </source>
</evidence>
<evidence type="ECO:0000305" key="3"/>
<proteinExistence type="inferred from homology"/>
<name>H4_CAPAN</name>
<sequence length="103" mass="11425">MSGRGKGGKGLGKGGAKRHRKVLRDNIQGITKPAIRRLARRGGVKRISGLIYEETRGVLKIFLENVIRDSVTYTEHARRKTVTAMDVVYALKRQGRTLYGFGG</sequence>
<accession>Q71V09</accession>
<comment type="function">
    <text>Core component of nucleosome. Nucleosomes wrap and compact DNA into chromatin, limiting DNA accessibility to the cellular machineries which require DNA as a template. Histones thereby play a central role in transcription regulation, DNA repair, DNA replication and chromosomal stability. DNA accessibility is regulated via a complex set of post-translational modifications of histones, also called histone code, and nucleosome remodeling.</text>
</comment>
<comment type="subunit">
    <text>The nucleosome is a histone octamer containing two molecules each of H2A, H2B, H3 and H4 assembled in one H3-H4 heterotetramer and two H2A-H2B heterodimers. The octamer wraps approximately 147 bp of DNA.</text>
</comment>
<comment type="subcellular location">
    <subcellularLocation>
        <location evidence="1">Nucleus</location>
    </subcellularLocation>
    <subcellularLocation>
        <location evidence="1">Chromosome</location>
    </subcellularLocation>
</comment>
<comment type="similarity">
    <text evidence="3">Belongs to the histone H4 family.</text>
</comment>